<dbReference type="EC" id="6.3.5.11" evidence="1"/>
<dbReference type="EMBL" id="BA000011">
    <property type="protein sequence ID" value="BAB59553.1"/>
    <property type="molecule type" value="Genomic_DNA"/>
</dbReference>
<dbReference type="RefSeq" id="WP_010916667.1">
    <property type="nucleotide sequence ID" value="NC_002689.2"/>
</dbReference>
<dbReference type="SMR" id="Q97BP4"/>
<dbReference type="STRING" id="273116.gene:9381189"/>
<dbReference type="PaxDb" id="273116-14324626"/>
<dbReference type="GeneID" id="1440925"/>
<dbReference type="KEGG" id="tvo:TVG0399197"/>
<dbReference type="eggNOG" id="arCOG00106">
    <property type="taxonomic scope" value="Archaea"/>
</dbReference>
<dbReference type="HOGENOM" id="CLU_022752_2_0_2"/>
<dbReference type="OrthoDB" id="8896at2157"/>
<dbReference type="PhylomeDB" id="Q97BP4"/>
<dbReference type="UniPathway" id="UPA00148">
    <property type="reaction ID" value="UER00231"/>
</dbReference>
<dbReference type="Proteomes" id="UP000001017">
    <property type="component" value="Chromosome"/>
</dbReference>
<dbReference type="GO" id="GO:0005524">
    <property type="term" value="F:ATP binding"/>
    <property type="evidence" value="ECO:0007669"/>
    <property type="project" value="UniProtKB-UniRule"/>
</dbReference>
<dbReference type="GO" id="GO:0042242">
    <property type="term" value="F:cobyrinic acid a,c-diamide synthase activity"/>
    <property type="evidence" value="ECO:0007669"/>
    <property type="project" value="UniProtKB-UniRule"/>
</dbReference>
<dbReference type="GO" id="GO:0009236">
    <property type="term" value="P:cobalamin biosynthetic process"/>
    <property type="evidence" value="ECO:0007669"/>
    <property type="project" value="UniProtKB-UniRule"/>
</dbReference>
<dbReference type="CDD" id="cd05388">
    <property type="entry name" value="CobB_N"/>
    <property type="match status" value="1"/>
</dbReference>
<dbReference type="CDD" id="cd03130">
    <property type="entry name" value="GATase1_CobB"/>
    <property type="match status" value="1"/>
</dbReference>
<dbReference type="Gene3D" id="3.40.50.880">
    <property type="match status" value="1"/>
</dbReference>
<dbReference type="Gene3D" id="3.40.50.300">
    <property type="entry name" value="P-loop containing nucleotide triphosphate hydrolases"/>
    <property type="match status" value="2"/>
</dbReference>
<dbReference type="HAMAP" id="MF_00027">
    <property type="entry name" value="CobB_CbiA"/>
    <property type="match status" value="1"/>
</dbReference>
<dbReference type="InterPro" id="IPR004484">
    <property type="entry name" value="CbiA/CobB_synth"/>
</dbReference>
<dbReference type="InterPro" id="IPR029062">
    <property type="entry name" value="Class_I_gatase-like"/>
</dbReference>
<dbReference type="InterPro" id="IPR002586">
    <property type="entry name" value="CobQ/CobB/MinD/ParA_Nub-bd_dom"/>
</dbReference>
<dbReference type="InterPro" id="IPR011698">
    <property type="entry name" value="GATase_3"/>
</dbReference>
<dbReference type="InterPro" id="IPR027417">
    <property type="entry name" value="P-loop_NTPase"/>
</dbReference>
<dbReference type="NCBIfam" id="TIGR00379">
    <property type="entry name" value="cobB"/>
    <property type="match status" value="1"/>
</dbReference>
<dbReference type="NCBIfam" id="NF002204">
    <property type="entry name" value="PRK01077.1"/>
    <property type="match status" value="1"/>
</dbReference>
<dbReference type="PANTHER" id="PTHR43873">
    <property type="entry name" value="COBYRINATE A,C-DIAMIDE SYNTHASE"/>
    <property type="match status" value="1"/>
</dbReference>
<dbReference type="PANTHER" id="PTHR43873:SF1">
    <property type="entry name" value="COBYRINATE A,C-DIAMIDE SYNTHASE"/>
    <property type="match status" value="1"/>
</dbReference>
<dbReference type="Pfam" id="PF01656">
    <property type="entry name" value="CbiA"/>
    <property type="match status" value="1"/>
</dbReference>
<dbReference type="Pfam" id="PF07685">
    <property type="entry name" value="GATase_3"/>
    <property type="match status" value="1"/>
</dbReference>
<dbReference type="SUPFAM" id="SSF52317">
    <property type="entry name" value="Class I glutamine amidotransferase-like"/>
    <property type="match status" value="1"/>
</dbReference>
<dbReference type="SUPFAM" id="SSF52540">
    <property type="entry name" value="P-loop containing nucleoside triphosphate hydrolases"/>
    <property type="match status" value="1"/>
</dbReference>
<dbReference type="PROSITE" id="PS51274">
    <property type="entry name" value="GATASE_COBBQ"/>
    <property type="match status" value="1"/>
</dbReference>
<protein>
    <recommendedName>
        <fullName evidence="1">Cobyrinate a,c-diamide synthase</fullName>
        <ecNumber evidence="1">6.3.5.11</ecNumber>
    </recommendedName>
    <alternativeName>
        <fullName evidence="1">Cobyrinic acid a,c-diamide synthetase</fullName>
    </alternativeName>
</protein>
<evidence type="ECO:0000255" key="1">
    <source>
        <dbReference type="HAMAP-Rule" id="MF_00027"/>
    </source>
</evidence>
<keyword id="KW-0067">ATP-binding</keyword>
<keyword id="KW-0169">Cobalamin biosynthesis</keyword>
<keyword id="KW-0315">Glutamine amidotransferase</keyword>
<keyword id="KW-0436">Ligase</keyword>
<keyword id="KW-0460">Magnesium</keyword>
<keyword id="KW-0547">Nucleotide-binding</keyword>
<accession>Q97BP4</accession>
<comment type="function">
    <text evidence="1">Catalyzes the ATP-dependent amidation of the two carboxylate groups at positions a and c of cobyrinate, using either L-glutamine or ammonia as the nitrogen source.</text>
</comment>
<comment type="catalytic activity">
    <reaction evidence="1">
        <text>cob(II)yrinate + 2 L-glutamine + 2 ATP + 2 H2O = cob(II)yrinate a,c diamide + 2 L-glutamate + 2 ADP + 2 phosphate + 2 H(+)</text>
        <dbReference type="Rhea" id="RHEA:26289"/>
        <dbReference type="ChEBI" id="CHEBI:15377"/>
        <dbReference type="ChEBI" id="CHEBI:15378"/>
        <dbReference type="ChEBI" id="CHEBI:29985"/>
        <dbReference type="ChEBI" id="CHEBI:30616"/>
        <dbReference type="ChEBI" id="CHEBI:43474"/>
        <dbReference type="ChEBI" id="CHEBI:58359"/>
        <dbReference type="ChEBI" id="CHEBI:58537"/>
        <dbReference type="ChEBI" id="CHEBI:58894"/>
        <dbReference type="ChEBI" id="CHEBI:456216"/>
        <dbReference type="EC" id="6.3.5.11"/>
    </reaction>
</comment>
<comment type="cofactor">
    <cofactor evidence="1">
        <name>Mg(2+)</name>
        <dbReference type="ChEBI" id="CHEBI:18420"/>
    </cofactor>
</comment>
<comment type="pathway">
    <text evidence="1">Cofactor biosynthesis; adenosylcobalamin biosynthesis; cob(II)yrinate a,c-diamide from sirohydrochlorin (anaerobic route): step 10/10.</text>
</comment>
<comment type="domain">
    <text evidence="1">Comprises of two domains. The C-terminal domain contains the binding site for glutamine and catalyzes the hydrolysis of this substrate to glutamate and ammonia. The N-terminal domain is anticipated to bind ATP and cobyrinate and catalyzes the ultimate synthesis of the diamide product. The ammonia produced via the glutaminase domain is probably translocated to the adjacent domain via a molecular tunnel, where it reacts with an activated intermediate.</text>
</comment>
<comment type="miscellaneous">
    <text evidence="1">The a and c carboxylates of cobyrinate are activated for nucleophilic attack via formation of a phosphorylated intermediate by ATP. CbiA catalyzes first the amidation of the c-carboxylate, and then that of the a-carboxylate.</text>
</comment>
<comment type="similarity">
    <text evidence="1">Belongs to the CobB/CbiA family.</text>
</comment>
<proteinExistence type="inferred from homology"/>
<organism>
    <name type="scientific">Thermoplasma volcanium (strain ATCC 51530 / DSM 4299 / JCM 9571 / NBRC 15438 / GSS1)</name>
    <dbReference type="NCBI Taxonomy" id="273116"/>
    <lineage>
        <taxon>Archaea</taxon>
        <taxon>Methanobacteriati</taxon>
        <taxon>Thermoplasmatota</taxon>
        <taxon>Thermoplasmata</taxon>
        <taxon>Thermoplasmatales</taxon>
        <taxon>Thermoplasmataceae</taxon>
        <taxon>Thermoplasma</taxon>
    </lineage>
</organism>
<sequence length="454" mass="50355">MKVPRVIIAGTNSGVGKTTTTLAVISALKNKGLKVKPYKVGPDYIDPQFHSLLAGATSDNLDLWMIPRERIFQLLADASTSFNISVIEGVMGLLDGFGSTDEGSTLDLARITGTPIILVIDGYGLSGSAAAIVKGFKDFSGDLLAGVIVTRVSGERHYDLIKKAIEDNTNVRVLGYIEKNDEVRLESRHLGLVQASELNSFSDYIERLSKVTHINVDGIIEIARASRDLDPKFSPLLSRVGYAKIAVAYDSAFDFYYEENFRVLRNLGAELVFFSPLNNEIPPEDTDGLYIGGGYPEVFAKKLAYAVDARENIAKLIKKGVPTLAECGGYMYLTRTIVGQDGIEYPGVGIVPAKTFLTDKLILGYREIVSKTSNMLLRHGETARGHEFHRSTIQFQDKVDHPFVLKYKDRFEEDGYYSNNVVASYVHIHFLSNIAIPKRFVEECIRYSKKREIS</sequence>
<gene>
    <name evidence="1" type="primary">cbiA</name>
    <name type="ordered locus">TV0411</name>
    <name type="ORF">TVG0399197</name>
</gene>
<reference key="1">
    <citation type="journal article" date="2000" name="Proc. Natl. Acad. Sci. U.S.A.">
        <title>Archaeal adaptation to higher temperatures revealed by genomic sequence of Thermoplasma volcanium.</title>
        <authorList>
            <person name="Kawashima T."/>
            <person name="Amano N."/>
            <person name="Koike H."/>
            <person name="Makino S."/>
            <person name="Higuchi S."/>
            <person name="Kawashima-Ohya Y."/>
            <person name="Watanabe K."/>
            <person name="Yamazaki M."/>
            <person name="Kanehori K."/>
            <person name="Kawamoto T."/>
            <person name="Nunoshiba T."/>
            <person name="Yamamoto Y."/>
            <person name="Aramaki H."/>
            <person name="Makino K."/>
            <person name="Suzuki M."/>
        </authorList>
    </citation>
    <scope>NUCLEOTIDE SEQUENCE [LARGE SCALE GENOMIC DNA]</scope>
    <source>
        <strain>ATCC 51530 / DSM 4299 / JCM 9571 / NBRC 15438 / GSS1</strain>
    </source>
</reference>
<feature type="chain" id="PRO_0000141283" description="Cobyrinate a,c-diamide synthase">
    <location>
        <begin position="1"/>
        <end position="454"/>
    </location>
</feature>
<feature type="domain" description="GATase cobBQ-type" evidence="1">
    <location>
        <begin position="244"/>
        <end position="435"/>
    </location>
</feature>
<feature type="active site" description="Nucleophile" evidence="1">
    <location>
        <position position="327"/>
    </location>
</feature>
<feature type="site" description="Increases nucleophilicity of active site Cys" evidence="1">
    <location>
        <position position="427"/>
    </location>
</feature>
<name>CBIA_THEVO</name>